<feature type="chain" id="PRO_0000161737" description="DNA ligase">
    <location>
        <begin position="1"/>
        <end position="670"/>
    </location>
</feature>
<feature type="domain" description="BRCT" evidence="1">
    <location>
        <begin position="589"/>
        <end position="670"/>
    </location>
</feature>
<feature type="active site" description="N6-AMP-lysine intermediate" evidence="1 2">
    <location>
        <position position="114"/>
    </location>
</feature>
<feature type="binding site" evidence="1">
    <location>
        <begin position="34"/>
        <end position="38"/>
    </location>
    <ligand>
        <name>NAD(+)</name>
        <dbReference type="ChEBI" id="CHEBI:57540"/>
    </ligand>
</feature>
<feature type="binding site" evidence="1">
    <location>
        <begin position="83"/>
        <end position="84"/>
    </location>
    <ligand>
        <name>NAD(+)</name>
        <dbReference type="ChEBI" id="CHEBI:57540"/>
    </ligand>
</feature>
<feature type="binding site" evidence="1">
    <location>
        <position position="112"/>
    </location>
    <ligand>
        <name>NAD(+)</name>
        <dbReference type="ChEBI" id="CHEBI:57540"/>
    </ligand>
</feature>
<feature type="binding site" evidence="1">
    <location>
        <position position="135"/>
    </location>
    <ligand>
        <name>NAD(+)</name>
        <dbReference type="ChEBI" id="CHEBI:57540"/>
    </ligand>
</feature>
<feature type="binding site" evidence="1">
    <location>
        <position position="169"/>
    </location>
    <ligand>
        <name>NAD(+)</name>
        <dbReference type="ChEBI" id="CHEBI:57540"/>
    </ligand>
</feature>
<feature type="binding site" evidence="1">
    <location>
        <position position="285"/>
    </location>
    <ligand>
        <name>NAD(+)</name>
        <dbReference type="ChEBI" id="CHEBI:57540"/>
    </ligand>
</feature>
<feature type="binding site" evidence="1">
    <location>
        <position position="309"/>
    </location>
    <ligand>
        <name>NAD(+)</name>
        <dbReference type="ChEBI" id="CHEBI:57540"/>
    </ligand>
</feature>
<feature type="binding site" evidence="1">
    <location>
        <position position="403"/>
    </location>
    <ligand>
        <name>Zn(2+)</name>
        <dbReference type="ChEBI" id="CHEBI:29105"/>
    </ligand>
</feature>
<feature type="binding site" evidence="1">
    <location>
        <position position="406"/>
    </location>
    <ligand>
        <name>Zn(2+)</name>
        <dbReference type="ChEBI" id="CHEBI:29105"/>
    </ligand>
</feature>
<feature type="binding site" evidence="1">
    <location>
        <position position="421"/>
    </location>
    <ligand>
        <name>Zn(2+)</name>
        <dbReference type="ChEBI" id="CHEBI:29105"/>
    </ligand>
</feature>
<feature type="binding site" evidence="1">
    <location>
        <position position="426"/>
    </location>
    <ligand>
        <name>Zn(2+)</name>
        <dbReference type="ChEBI" id="CHEBI:29105"/>
    </ligand>
</feature>
<feature type="helix" evidence="3">
    <location>
        <begin position="3"/>
        <end position="25"/>
    </location>
</feature>
<feature type="helix" evidence="3">
    <location>
        <begin position="35"/>
        <end position="50"/>
    </location>
</feature>
<feature type="helix" evidence="3">
    <location>
        <begin position="52"/>
        <end position="54"/>
    </location>
</feature>
<feature type="helix" evidence="3">
    <location>
        <begin position="60"/>
        <end position="63"/>
    </location>
</feature>
<feature type="helix" evidence="3">
    <location>
        <begin position="92"/>
        <end position="104"/>
    </location>
</feature>
<feature type="strand" evidence="3">
    <location>
        <begin position="109"/>
        <end position="125"/>
    </location>
</feature>
<feature type="strand" evidence="3">
    <location>
        <begin position="128"/>
        <end position="134"/>
    </location>
</feature>
<feature type="strand" evidence="3">
    <location>
        <begin position="141"/>
        <end position="143"/>
    </location>
</feature>
<feature type="helix" evidence="3">
    <location>
        <begin position="145"/>
        <end position="149"/>
    </location>
</feature>
<feature type="strand" evidence="3">
    <location>
        <begin position="164"/>
        <end position="171"/>
    </location>
</feature>
<feature type="helix" evidence="3">
    <location>
        <begin position="174"/>
        <end position="186"/>
    </location>
</feature>
<feature type="helix" evidence="3">
    <location>
        <begin position="195"/>
        <end position="204"/>
    </location>
</feature>
<feature type="helix" evidence="3">
    <location>
        <begin position="208"/>
        <end position="213"/>
    </location>
</feature>
<feature type="strand" evidence="3">
    <location>
        <begin position="217"/>
        <end position="223"/>
    </location>
</feature>
<feature type="turn" evidence="3">
    <location>
        <begin position="224"/>
        <end position="230"/>
    </location>
</feature>
<feature type="helix" evidence="3">
    <location>
        <begin position="234"/>
        <end position="243"/>
    </location>
</feature>
<feature type="strand" evidence="3">
    <location>
        <begin position="253"/>
        <end position="257"/>
    </location>
</feature>
<feature type="helix" evidence="3">
    <location>
        <begin position="258"/>
        <end position="271"/>
    </location>
</feature>
<feature type="strand" evidence="3">
    <location>
        <begin position="279"/>
        <end position="286"/>
    </location>
</feature>
<feature type="helix" evidence="3">
    <location>
        <begin position="289"/>
        <end position="295"/>
    </location>
</feature>
<feature type="strand" evidence="3">
    <location>
        <begin position="299"/>
        <end position="301"/>
    </location>
</feature>
<feature type="strand" evidence="3">
    <location>
        <begin position="305"/>
        <end position="309"/>
    </location>
</feature>
<reference key="1">
    <citation type="journal article" date="1999" name="Biochim. Biophys. Acta">
        <title>Nucleotide sequence, heterologous expression and novel purification of DNA ligase from Bacillus stearothermophilus.</title>
        <authorList>
            <person name="Brannigan J.A."/>
            <person name="Ashford S.R."/>
            <person name="Doherty A.J."/>
            <person name="Timson D.J."/>
            <person name="Wigley D.B."/>
        </authorList>
    </citation>
    <scope>NUCLEOTIDE SEQUENCE [GENOMIC DNA]</scope>
    <source>
        <strain>ATCC 29609 / DSM 2027 / NCA 1503 / NCIMB 8924</strain>
    </source>
</reference>
<reference key="2">
    <citation type="journal article" date="1999" name="Structure">
        <title>Structure of the adenylation domain of an NAD+-dependent DNA ligase.</title>
        <authorList>
            <person name="Singleton M.R."/>
            <person name="Hakansson K."/>
            <person name="Timson D.J."/>
            <person name="Wigley D.B."/>
        </authorList>
    </citation>
    <scope>X-RAY CRYSTALLOGRAPHY (2.8 ANGSTROMS) OF 1-318</scope>
    <scope>ACTIVE SITE</scope>
</reference>
<protein>
    <recommendedName>
        <fullName evidence="1">DNA ligase</fullName>
        <ecNumber evidence="1">6.5.1.2</ecNumber>
    </recommendedName>
    <alternativeName>
        <fullName evidence="1">Polydeoxyribonucleotide synthase [NAD(+)]</fullName>
    </alternativeName>
</protein>
<evidence type="ECO:0000255" key="1">
    <source>
        <dbReference type="HAMAP-Rule" id="MF_01588"/>
    </source>
</evidence>
<evidence type="ECO:0000305" key="2">
    <source>
    </source>
</evidence>
<evidence type="ECO:0007829" key="3">
    <source>
        <dbReference type="PDB" id="1B04"/>
    </source>
</evidence>
<dbReference type="EC" id="6.5.1.2" evidence="1"/>
<dbReference type="EMBL" id="AJ011676">
    <property type="protein sequence ID" value="CAA09732.1"/>
    <property type="molecule type" value="Genomic_DNA"/>
</dbReference>
<dbReference type="RefSeq" id="WP_033016671.1">
    <property type="nucleotide sequence ID" value="NZ_RCTK01000024.1"/>
</dbReference>
<dbReference type="PDB" id="1B04">
    <property type="method" value="X-ray"/>
    <property type="resolution" value="2.80 A"/>
    <property type="chains" value="A/B=1-318"/>
</dbReference>
<dbReference type="PDBsum" id="1B04"/>
<dbReference type="SMR" id="O87703"/>
<dbReference type="OrthoDB" id="9759736at2"/>
<dbReference type="BRENDA" id="6.5.1.2">
    <property type="organism ID" value="623"/>
</dbReference>
<dbReference type="EvolutionaryTrace" id="O87703"/>
<dbReference type="GO" id="GO:0005829">
    <property type="term" value="C:cytosol"/>
    <property type="evidence" value="ECO:0007669"/>
    <property type="project" value="TreeGrafter"/>
</dbReference>
<dbReference type="GO" id="GO:0003677">
    <property type="term" value="F:DNA binding"/>
    <property type="evidence" value="ECO:0007669"/>
    <property type="project" value="InterPro"/>
</dbReference>
<dbReference type="GO" id="GO:0003911">
    <property type="term" value="F:DNA ligase (NAD+) activity"/>
    <property type="evidence" value="ECO:0007669"/>
    <property type="project" value="UniProtKB-UniRule"/>
</dbReference>
<dbReference type="GO" id="GO:0046872">
    <property type="term" value="F:metal ion binding"/>
    <property type="evidence" value="ECO:0007669"/>
    <property type="project" value="UniProtKB-KW"/>
</dbReference>
<dbReference type="GO" id="GO:0006281">
    <property type="term" value="P:DNA repair"/>
    <property type="evidence" value="ECO:0007669"/>
    <property type="project" value="UniProtKB-KW"/>
</dbReference>
<dbReference type="GO" id="GO:0006260">
    <property type="term" value="P:DNA replication"/>
    <property type="evidence" value="ECO:0007669"/>
    <property type="project" value="UniProtKB-KW"/>
</dbReference>
<dbReference type="CDD" id="cd17748">
    <property type="entry name" value="BRCT_DNA_ligase_like"/>
    <property type="match status" value="1"/>
</dbReference>
<dbReference type="CDD" id="cd00114">
    <property type="entry name" value="LIGANc"/>
    <property type="match status" value="1"/>
</dbReference>
<dbReference type="FunFam" id="1.10.150.20:FF:000006">
    <property type="entry name" value="DNA ligase"/>
    <property type="match status" value="1"/>
</dbReference>
<dbReference type="FunFam" id="1.10.150.20:FF:000007">
    <property type="entry name" value="DNA ligase"/>
    <property type="match status" value="1"/>
</dbReference>
<dbReference type="FunFam" id="1.10.287.610:FF:000002">
    <property type="entry name" value="DNA ligase"/>
    <property type="match status" value="1"/>
</dbReference>
<dbReference type="FunFam" id="2.40.50.140:FF:000012">
    <property type="entry name" value="DNA ligase"/>
    <property type="match status" value="1"/>
</dbReference>
<dbReference type="FunFam" id="3.30.470.30:FF:000001">
    <property type="entry name" value="DNA ligase"/>
    <property type="match status" value="1"/>
</dbReference>
<dbReference type="Gene3D" id="6.20.10.30">
    <property type="match status" value="1"/>
</dbReference>
<dbReference type="Gene3D" id="1.10.150.20">
    <property type="entry name" value="5' to 3' exonuclease, C-terminal subdomain"/>
    <property type="match status" value="2"/>
</dbReference>
<dbReference type="Gene3D" id="3.40.50.10190">
    <property type="entry name" value="BRCT domain"/>
    <property type="match status" value="1"/>
</dbReference>
<dbReference type="Gene3D" id="3.30.470.30">
    <property type="entry name" value="DNA ligase/mRNA capping enzyme"/>
    <property type="match status" value="1"/>
</dbReference>
<dbReference type="Gene3D" id="1.10.287.610">
    <property type="entry name" value="Helix hairpin bin"/>
    <property type="match status" value="1"/>
</dbReference>
<dbReference type="Gene3D" id="2.40.50.140">
    <property type="entry name" value="Nucleic acid-binding proteins"/>
    <property type="match status" value="1"/>
</dbReference>
<dbReference type="HAMAP" id="MF_01588">
    <property type="entry name" value="DNA_ligase_A"/>
    <property type="match status" value="1"/>
</dbReference>
<dbReference type="InterPro" id="IPR001357">
    <property type="entry name" value="BRCT_dom"/>
</dbReference>
<dbReference type="InterPro" id="IPR036420">
    <property type="entry name" value="BRCT_dom_sf"/>
</dbReference>
<dbReference type="InterPro" id="IPR041663">
    <property type="entry name" value="DisA/LigA_HHH"/>
</dbReference>
<dbReference type="InterPro" id="IPR001679">
    <property type="entry name" value="DNA_ligase"/>
</dbReference>
<dbReference type="InterPro" id="IPR018239">
    <property type="entry name" value="DNA_ligase_AS"/>
</dbReference>
<dbReference type="InterPro" id="IPR033136">
    <property type="entry name" value="DNA_ligase_CS"/>
</dbReference>
<dbReference type="InterPro" id="IPR013839">
    <property type="entry name" value="DNAligase_adenylation"/>
</dbReference>
<dbReference type="InterPro" id="IPR013840">
    <property type="entry name" value="DNAligase_N"/>
</dbReference>
<dbReference type="InterPro" id="IPR003583">
    <property type="entry name" value="Hlx-hairpin-Hlx_DNA-bd_motif"/>
</dbReference>
<dbReference type="InterPro" id="IPR012340">
    <property type="entry name" value="NA-bd_OB-fold"/>
</dbReference>
<dbReference type="InterPro" id="IPR004150">
    <property type="entry name" value="NAD_DNA_ligase_OB"/>
</dbReference>
<dbReference type="InterPro" id="IPR010994">
    <property type="entry name" value="RuvA_2-like"/>
</dbReference>
<dbReference type="InterPro" id="IPR004149">
    <property type="entry name" value="Znf_DNAligase_C4"/>
</dbReference>
<dbReference type="NCBIfam" id="TIGR00575">
    <property type="entry name" value="dnlj"/>
    <property type="match status" value="1"/>
</dbReference>
<dbReference type="NCBIfam" id="NF005932">
    <property type="entry name" value="PRK07956.1"/>
    <property type="match status" value="1"/>
</dbReference>
<dbReference type="PANTHER" id="PTHR23389">
    <property type="entry name" value="CHROMOSOME TRANSMISSION FIDELITY FACTOR 18"/>
    <property type="match status" value="1"/>
</dbReference>
<dbReference type="PANTHER" id="PTHR23389:SF9">
    <property type="entry name" value="DNA LIGASE"/>
    <property type="match status" value="1"/>
</dbReference>
<dbReference type="Pfam" id="PF00533">
    <property type="entry name" value="BRCT"/>
    <property type="match status" value="1"/>
</dbReference>
<dbReference type="Pfam" id="PF01653">
    <property type="entry name" value="DNA_ligase_aden"/>
    <property type="match status" value="1"/>
</dbReference>
<dbReference type="Pfam" id="PF03120">
    <property type="entry name" value="DNA_ligase_OB"/>
    <property type="match status" value="1"/>
</dbReference>
<dbReference type="Pfam" id="PF03119">
    <property type="entry name" value="DNA_ligase_ZBD"/>
    <property type="match status" value="1"/>
</dbReference>
<dbReference type="Pfam" id="PF12826">
    <property type="entry name" value="HHH_2"/>
    <property type="match status" value="1"/>
</dbReference>
<dbReference type="Pfam" id="PF14520">
    <property type="entry name" value="HHH_5"/>
    <property type="match status" value="1"/>
</dbReference>
<dbReference type="PIRSF" id="PIRSF001604">
    <property type="entry name" value="LigA"/>
    <property type="match status" value="1"/>
</dbReference>
<dbReference type="SMART" id="SM00292">
    <property type="entry name" value="BRCT"/>
    <property type="match status" value="1"/>
</dbReference>
<dbReference type="SMART" id="SM00278">
    <property type="entry name" value="HhH1"/>
    <property type="match status" value="3"/>
</dbReference>
<dbReference type="SMART" id="SM00532">
    <property type="entry name" value="LIGANc"/>
    <property type="match status" value="1"/>
</dbReference>
<dbReference type="SUPFAM" id="SSF52113">
    <property type="entry name" value="BRCT domain"/>
    <property type="match status" value="1"/>
</dbReference>
<dbReference type="SUPFAM" id="SSF56091">
    <property type="entry name" value="DNA ligase/mRNA capping enzyme, catalytic domain"/>
    <property type="match status" value="1"/>
</dbReference>
<dbReference type="SUPFAM" id="SSF50249">
    <property type="entry name" value="Nucleic acid-binding proteins"/>
    <property type="match status" value="1"/>
</dbReference>
<dbReference type="SUPFAM" id="SSF47781">
    <property type="entry name" value="RuvA domain 2-like"/>
    <property type="match status" value="1"/>
</dbReference>
<dbReference type="PROSITE" id="PS50172">
    <property type="entry name" value="BRCT"/>
    <property type="match status" value="1"/>
</dbReference>
<dbReference type="PROSITE" id="PS01055">
    <property type="entry name" value="DNA_LIGASE_N1"/>
    <property type="match status" value="1"/>
</dbReference>
<dbReference type="PROSITE" id="PS01056">
    <property type="entry name" value="DNA_LIGASE_N2"/>
    <property type="match status" value="1"/>
</dbReference>
<organism>
    <name type="scientific">Geobacillus stearothermophilus</name>
    <name type="common">Bacillus stearothermophilus</name>
    <dbReference type="NCBI Taxonomy" id="1422"/>
    <lineage>
        <taxon>Bacteria</taxon>
        <taxon>Bacillati</taxon>
        <taxon>Bacillota</taxon>
        <taxon>Bacilli</taxon>
        <taxon>Bacillales</taxon>
        <taxon>Anoxybacillaceae</taxon>
        <taxon>Geobacillus</taxon>
    </lineage>
</organism>
<comment type="function">
    <text evidence="1">DNA ligase that catalyzes the formation of phosphodiester linkages between 5'-phosphoryl and 3'-hydroxyl groups in double-stranded DNA using NAD as a coenzyme and as the energy source for the reaction. It is essential for DNA replication and repair of damaged DNA.</text>
</comment>
<comment type="catalytic activity">
    <reaction evidence="1">
        <text>NAD(+) + (deoxyribonucleotide)n-3'-hydroxyl + 5'-phospho-(deoxyribonucleotide)m = (deoxyribonucleotide)n+m + AMP + beta-nicotinamide D-nucleotide.</text>
        <dbReference type="EC" id="6.5.1.2"/>
    </reaction>
</comment>
<comment type="cofactor">
    <cofactor evidence="1">
        <name>Mg(2+)</name>
        <dbReference type="ChEBI" id="CHEBI:18420"/>
    </cofactor>
    <cofactor evidence="1">
        <name>Mn(2+)</name>
        <dbReference type="ChEBI" id="CHEBI:29035"/>
    </cofactor>
</comment>
<comment type="similarity">
    <text evidence="1">Belongs to the NAD-dependent DNA ligase family. LigA subfamily.</text>
</comment>
<proteinExistence type="evidence at protein level"/>
<accession>O87703</accession>
<sequence>MDRQQAERRAAELRELLNRYGYEYYVLDRPSVPDAEYDRLMQELIAIEEQYPELKTSDSPTQRIGGPPLEAFRKVAHRVPMMSLANAFGEGDLRDFDRRVRQEVGEAAYVCELKIDGLAVSVRYEDGYFVQGATRGDGTTGEDITENLKTIRSLPLRLKEPVSLEARGEAFMPKASFLRLNEERKARGEELFANPRNAAAGSLRQLDPKVAASRQLDLFVYGLADAEALGIASHSEALDYLQALGFKVNPERRRCANIDEVIAFVSEWHDKRPQLPYEIDGIVIKVDSFAQQRALGATAKSPRWAIAYKFPAEEVVTTLIGIEVNVGRTGVVTPTAILEPVRVAGTTVQRATLHNEDFIREKDIRIGDAVIIKKAGDIIPEVVGVVVDRRDGDETPFAMPTHCPECESELVRLEGEVALRCLNPNCPAQLRERLIHFASRAAMNIEGLGEKVVTQLFNAGLVRDVADLYCLTKEQLVGLERMGEKSAANLLAAIEASKQNSLERLLFGLGIRYVGAKAAQLLAEHFETMERLERATKEELMAVPEIGEKMADAITAFFAQPEATELLQELRAYGVNMAYKGPKRSAEAPADSAFAGKTVVLTGKLASMSRNEAKEQIERLGGRVTGSVSRSTDLVIAGEDAGSKLEKAQQLGIEIWDESRFLQEINRGKR</sequence>
<gene>
    <name evidence="1" type="primary">ligA</name>
    <name type="synonym">lig</name>
</gene>
<name>DNLJ_GEOSE</name>
<keyword id="KW-0002">3D-structure</keyword>
<keyword id="KW-0227">DNA damage</keyword>
<keyword id="KW-0234">DNA repair</keyword>
<keyword id="KW-0235">DNA replication</keyword>
<keyword id="KW-0436">Ligase</keyword>
<keyword id="KW-0460">Magnesium</keyword>
<keyword id="KW-0464">Manganese</keyword>
<keyword id="KW-0479">Metal-binding</keyword>
<keyword id="KW-0520">NAD</keyword>
<keyword id="KW-0862">Zinc</keyword>